<comment type="function">
    <text evidence="1">The RuvA-RuvB-RuvC complex processes Holliday junction (HJ) DNA during genetic recombination and DNA repair, while the RuvA-RuvB complex plays an important role in the rescue of blocked DNA replication forks via replication fork reversal (RFR). RuvA specifically binds to HJ cruciform DNA, conferring on it an open structure. The RuvB hexamer acts as an ATP-dependent pump, pulling dsDNA into and through the RuvAB complex. HJ branch migration allows RuvC to scan DNA until it finds its consensus sequence, where it cleaves and resolves the cruciform DNA.</text>
</comment>
<comment type="subunit">
    <text evidence="1">Homotetramer. Forms an RuvA(8)-RuvB(12)-Holliday junction (HJ) complex. HJ DNA is sandwiched between 2 RuvA tetramers; dsDNA enters through RuvA and exits via RuvB. An RuvB hexamer assembles on each DNA strand where it exits the tetramer. Each RuvB hexamer is contacted by two RuvA subunits (via domain III) on 2 adjacent RuvB subunits; this complex drives branch migration. In the full resolvosome a probable DNA-RuvA(4)-RuvB(12)-RuvC(2) complex forms which resolves the HJ.</text>
</comment>
<comment type="subcellular location">
    <subcellularLocation>
        <location evidence="1">Cytoplasm</location>
    </subcellularLocation>
</comment>
<comment type="domain">
    <text evidence="1">Has three domains with a flexible linker between the domains II and III and assumes an 'L' shape. Domain III is highly mobile and contacts RuvB.</text>
</comment>
<comment type="similarity">
    <text evidence="1">Belongs to the RuvA family.</text>
</comment>
<accession>B5RLN1</accession>
<gene>
    <name evidence="1" type="primary">ruvA</name>
    <name type="ordered locus">BDU_29</name>
</gene>
<name>RUVA_BORDL</name>
<evidence type="ECO:0000255" key="1">
    <source>
        <dbReference type="HAMAP-Rule" id="MF_00031"/>
    </source>
</evidence>
<protein>
    <recommendedName>
        <fullName evidence="1">Holliday junction branch migration complex subunit RuvA</fullName>
    </recommendedName>
</protein>
<proteinExistence type="inferred from homology"/>
<reference key="1">
    <citation type="journal article" date="2008" name="PLoS Genet.">
        <title>The genome of Borrelia recurrentis, the agent of deadly louse-borne relapsing fever, is a degraded subset of tick-borne Borrelia duttonii.</title>
        <authorList>
            <person name="Lescot M."/>
            <person name="Audic S."/>
            <person name="Robert C."/>
            <person name="Nguyen T.T."/>
            <person name="Blanc G."/>
            <person name="Cutler S.J."/>
            <person name="Wincker P."/>
            <person name="Couloux A."/>
            <person name="Claverie J.-M."/>
            <person name="Raoult D."/>
            <person name="Drancourt M."/>
        </authorList>
    </citation>
    <scope>NUCLEOTIDE SEQUENCE [LARGE SCALE GENOMIC DNA]</scope>
    <source>
        <strain>Ly</strain>
    </source>
</reference>
<feature type="chain" id="PRO_1000090284" description="Holliday junction branch migration complex subunit RuvA">
    <location>
        <begin position="1"/>
        <end position="196"/>
    </location>
</feature>
<feature type="region of interest" description="Domain I" evidence="1">
    <location>
        <begin position="1"/>
        <end position="63"/>
    </location>
</feature>
<feature type="region of interest" description="Domain II" evidence="1">
    <location>
        <begin position="64"/>
        <end position="142"/>
    </location>
</feature>
<feature type="region of interest" description="Domain III" evidence="1">
    <location>
        <begin position="143"/>
        <end position="196"/>
    </location>
</feature>
<feature type="region of interest" description="Flexible linker" evidence="1">
    <location>
        <position position="143"/>
    </location>
</feature>
<keyword id="KW-0963">Cytoplasm</keyword>
<keyword id="KW-0227">DNA damage</keyword>
<keyword id="KW-0233">DNA recombination</keyword>
<keyword id="KW-0234">DNA repair</keyword>
<keyword id="KW-0238">DNA-binding</keyword>
<sequence>MINKIYGKIVDKKESSIIILAFPFEFEILVSSFCKMELRLLEDVEILTYFHFRDDDVKLFGFLNISEREVFEDLIGVDGIGPKAALKILSGIKYDAFRLAIAKEDINLISKVKGIGNKIAGKIFLKLRGKLVKGDESSSYMLKFKELEQSIVNMGFDRKLVVVAFREIMLSDKFLILKEAEQEQFLFTETLKRLSV</sequence>
<organism>
    <name type="scientific">Borrelia duttonii (strain Ly)</name>
    <dbReference type="NCBI Taxonomy" id="412419"/>
    <lineage>
        <taxon>Bacteria</taxon>
        <taxon>Pseudomonadati</taxon>
        <taxon>Spirochaetota</taxon>
        <taxon>Spirochaetia</taxon>
        <taxon>Spirochaetales</taxon>
        <taxon>Borreliaceae</taxon>
        <taxon>Borrelia</taxon>
    </lineage>
</organism>
<dbReference type="EMBL" id="CP000976">
    <property type="protein sequence ID" value="ACH92987.1"/>
    <property type="molecule type" value="Genomic_DNA"/>
</dbReference>
<dbReference type="RefSeq" id="WP_012537799.1">
    <property type="nucleotide sequence ID" value="NC_011229.1"/>
</dbReference>
<dbReference type="SMR" id="B5RLN1"/>
<dbReference type="STRING" id="412419.BDU_29"/>
<dbReference type="KEGG" id="bdu:BDU_29"/>
<dbReference type="eggNOG" id="COG0632">
    <property type="taxonomic scope" value="Bacteria"/>
</dbReference>
<dbReference type="HOGENOM" id="CLU_087936_2_0_12"/>
<dbReference type="OrthoDB" id="5293449at2"/>
<dbReference type="Proteomes" id="UP000000611">
    <property type="component" value="Chromosome"/>
</dbReference>
<dbReference type="GO" id="GO:0005737">
    <property type="term" value="C:cytoplasm"/>
    <property type="evidence" value="ECO:0007669"/>
    <property type="project" value="UniProtKB-SubCell"/>
</dbReference>
<dbReference type="GO" id="GO:0048476">
    <property type="term" value="C:Holliday junction resolvase complex"/>
    <property type="evidence" value="ECO:0007669"/>
    <property type="project" value="UniProtKB-UniRule"/>
</dbReference>
<dbReference type="GO" id="GO:0005524">
    <property type="term" value="F:ATP binding"/>
    <property type="evidence" value="ECO:0007669"/>
    <property type="project" value="InterPro"/>
</dbReference>
<dbReference type="GO" id="GO:0000400">
    <property type="term" value="F:four-way junction DNA binding"/>
    <property type="evidence" value="ECO:0007669"/>
    <property type="project" value="UniProtKB-UniRule"/>
</dbReference>
<dbReference type="GO" id="GO:0009378">
    <property type="term" value="F:four-way junction helicase activity"/>
    <property type="evidence" value="ECO:0007669"/>
    <property type="project" value="InterPro"/>
</dbReference>
<dbReference type="GO" id="GO:0006310">
    <property type="term" value="P:DNA recombination"/>
    <property type="evidence" value="ECO:0007669"/>
    <property type="project" value="UniProtKB-UniRule"/>
</dbReference>
<dbReference type="GO" id="GO:0006281">
    <property type="term" value="P:DNA repair"/>
    <property type="evidence" value="ECO:0007669"/>
    <property type="project" value="UniProtKB-UniRule"/>
</dbReference>
<dbReference type="Gene3D" id="1.10.150.20">
    <property type="entry name" value="5' to 3' exonuclease, C-terminal subdomain"/>
    <property type="match status" value="1"/>
</dbReference>
<dbReference type="Gene3D" id="2.40.50.140">
    <property type="entry name" value="Nucleic acid-binding proteins"/>
    <property type="match status" value="1"/>
</dbReference>
<dbReference type="HAMAP" id="MF_00031">
    <property type="entry name" value="DNA_HJ_migration_RuvA"/>
    <property type="match status" value="1"/>
</dbReference>
<dbReference type="InterPro" id="IPR013849">
    <property type="entry name" value="DNA_helicase_Holl-junc_RuvA_I"/>
</dbReference>
<dbReference type="InterPro" id="IPR003583">
    <property type="entry name" value="Hlx-hairpin-Hlx_DNA-bd_motif"/>
</dbReference>
<dbReference type="InterPro" id="IPR012340">
    <property type="entry name" value="NA-bd_OB-fold"/>
</dbReference>
<dbReference type="InterPro" id="IPR000085">
    <property type="entry name" value="RuvA"/>
</dbReference>
<dbReference type="InterPro" id="IPR010994">
    <property type="entry name" value="RuvA_2-like"/>
</dbReference>
<dbReference type="NCBIfam" id="TIGR00084">
    <property type="entry name" value="ruvA"/>
    <property type="match status" value="1"/>
</dbReference>
<dbReference type="Pfam" id="PF14520">
    <property type="entry name" value="HHH_5"/>
    <property type="match status" value="1"/>
</dbReference>
<dbReference type="Pfam" id="PF01330">
    <property type="entry name" value="RuvA_N"/>
    <property type="match status" value="1"/>
</dbReference>
<dbReference type="SMART" id="SM00278">
    <property type="entry name" value="HhH1"/>
    <property type="match status" value="2"/>
</dbReference>
<dbReference type="SUPFAM" id="SSF50249">
    <property type="entry name" value="Nucleic acid-binding proteins"/>
    <property type="match status" value="1"/>
</dbReference>
<dbReference type="SUPFAM" id="SSF47781">
    <property type="entry name" value="RuvA domain 2-like"/>
    <property type="match status" value="1"/>
</dbReference>